<dbReference type="EC" id="5.3.1.8" evidence="3"/>
<dbReference type="EMBL" id="AC021640">
    <property type="protein sequence ID" value="AAF32464.1"/>
    <property type="molecule type" value="Genomic_DNA"/>
</dbReference>
<dbReference type="EMBL" id="CP002686">
    <property type="protein sequence ID" value="AEE73831.1"/>
    <property type="molecule type" value="Genomic_DNA"/>
</dbReference>
<dbReference type="EMBL" id="AY070447">
    <property type="protein sequence ID" value="AAL49850.1"/>
    <property type="molecule type" value="mRNA"/>
</dbReference>
<dbReference type="EMBL" id="AY096564">
    <property type="protein sequence ID" value="AAM20214.1"/>
    <property type="molecule type" value="mRNA"/>
</dbReference>
<dbReference type="RefSeq" id="NP_186906.1">
    <property type="nucleotide sequence ID" value="NM_111125.4"/>
</dbReference>
<dbReference type="SMR" id="Q9M884"/>
<dbReference type="BioGRID" id="5990">
    <property type="interactions" value="1"/>
</dbReference>
<dbReference type="FunCoup" id="Q9M884">
    <property type="interactions" value="3684"/>
</dbReference>
<dbReference type="IntAct" id="Q9M884">
    <property type="interactions" value="1"/>
</dbReference>
<dbReference type="STRING" id="3702.Q9M884"/>
<dbReference type="iPTMnet" id="Q9M884"/>
<dbReference type="PaxDb" id="3702-AT3G02570.1"/>
<dbReference type="ProteomicsDB" id="250945"/>
<dbReference type="EnsemblPlants" id="AT3G02570.1">
    <property type="protein sequence ID" value="AT3G02570.1"/>
    <property type="gene ID" value="AT3G02570"/>
</dbReference>
<dbReference type="GeneID" id="820656"/>
<dbReference type="Gramene" id="AT3G02570.1">
    <property type="protein sequence ID" value="AT3G02570.1"/>
    <property type="gene ID" value="AT3G02570"/>
</dbReference>
<dbReference type="KEGG" id="ath:AT3G02570"/>
<dbReference type="Araport" id="AT3G02570"/>
<dbReference type="TAIR" id="AT3G02570">
    <property type="gene designation" value="MEE31"/>
</dbReference>
<dbReference type="eggNOG" id="KOG2757">
    <property type="taxonomic scope" value="Eukaryota"/>
</dbReference>
<dbReference type="HOGENOM" id="CLU_026967_0_0_1"/>
<dbReference type="InParanoid" id="Q9M884"/>
<dbReference type="OMA" id="DIGLFCG"/>
<dbReference type="OrthoDB" id="6605218at2759"/>
<dbReference type="PhylomeDB" id="Q9M884"/>
<dbReference type="BioCyc" id="ARA:AT3G02570-MONOMER"/>
<dbReference type="BioCyc" id="MetaCyc:AT3G02570-MONOMER"/>
<dbReference type="BRENDA" id="5.3.1.8">
    <property type="organism ID" value="399"/>
</dbReference>
<dbReference type="SABIO-RK" id="Q9M884"/>
<dbReference type="UniPathway" id="UPA00126">
    <property type="reaction ID" value="UER00423"/>
</dbReference>
<dbReference type="PRO" id="PR:Q9M884"/>
<dbReference type="Proteomes" id="UP000006548">
    <property type="component" value="Chromosome 3"/>
</dbReference>
<dbReference type="ExpressionAtlas" id="Q9M884">
    <property type="expression patterns" value="baseline and differential"/>
</dbReference>
<dbReference type="GO" id="GO:0004476">
    <property type="term" value="F:mannose-6-phosphate isomerase activity"/>
    <property type="evidence" value="ECO:0000314"/>
    <property type="project" value="TAIR"/>
</dbReference>
<dbReference type="GO" id="GO:0008270">
    <property type="term" value="F:zinc ion binding"/>
    <property type="evidence" value="ECO:0007669"/>
    <property type="project" value="InterPro"/>
</dbReference>
<dbReference type="GO" id="GO:0005975">
    <property type="term" value="P:carbohydrate metabolic process"/>
    <property type="evidence" value="ECO:0007669"/>
    <property type="project" value="InterPro"/>
</dbReference>
<dbReference type="GO" id="GO:0009793">
    <property type="term" value="P:embryo development ending in seed dormancy"/>
    <property type="evidence" value="ECO:0000315"/>
    <property type="project" value="TAIR"/>
</dbReference>
<dbReference type="GO" id="GO:0009298">
    <property type="term" value="P:GDP-mannose biosynthetic process"/>
    <property type="evidence" value="ECO:0007669"/>
    <property type="project" value="UniProtKB-UniPathway"/>
</dbReference>
<dbReference type="GO" id="GO:0046686">
    <property type="term" value="P:response to cadmium ion"/>
    <property type="evidence" value="ECO:0000270"/>
    <property type="project" value="UniProtKB"/>
</dbReference>
<dbReference type="GO" id="GO:0032025">
    <property type="term" value="P:response to cobalt ion"/>
    <property type="evidence" value="ECO:0000270"/>
    <property type="project" value="UniProtKB"/>
</dbReference>
<dbReference type="GO" id="GO:0033591">
    <property type="term" value="P:response to L-ascorbic acid"/>
    <property type="evidence" value="ECO:0000270"/>
    <property type="project" value="UniProtKB"/>
</dbReference>
<dbReference type="GO" id="GO:0009416">
    <property type="term" value="P:response to light stimulus"/>
    <property type="evidence" value="ECO:0000270"/>
    <property type="project" value="UniProtKB"/>
</dbReference>
<dbReference type="GO" id="GO:0010043">
    <property type="term" value="P:response to zinc ion"/>
    <property type="evidence" value="ECO:0000270"/>
    <property type="project" value="UniProtKB"/>
</dbReference>
<dbReference type="CDD" id="cd07011">
    <property type="entry name" value="cupin_PMI_type_I_N"/>
    <property type="match status" value="1"/>
</dbReference>
<dbReference type="FunFam" id="1.10.441.10:FF:000001">
    <property type="entry name" value="Mannose-6-phosphate isomerase"/>
    <property type="match status" value="1"/>
</dbReference>
<dbReference type="FunFam" id="2.60.120.10:FF:000044">
    <property type="entry name" value="Mannose-6-phosphate isomerase"/>
    <property type="match status" value="1"/>
</dbReference>
<dbReference type="Gene3D" id="2.60.120.10">
    <property type="entry name" value="Jelly Rolls"/>
    <property type="match status" value="2"/>
</dbReference>
<dbReference type="Gene3D" id="1.10.441.10">
    <property type="entry name" value="Phosphomannose Isomerase, domain 2"/>
    <property type="match status" value="1"/>
</dbReference>
<dbReference type="InterPro" id="IPR001250">
    <property type="entry name" value="Man6P_Isoase-1"/>
</dbReference>
<dbReference type="InterPro" id="IPR016305">
    <property type="entry name" value="Mannose-6-P_Isomerase"/>
</dbReference>
<dbReference type="InterPro" id="IPR018050">
    <property type="entry name" value="Pmannose_isomerase-type1_CS"/>
</dbReference>
<dbReference type="InterPro" id="IPR046457">
    <property type="entry name" value="PMI_typeI_cat"/>
</dbReference>
<dbReference type="InterPro" id="IPR046458">
    <property type="entry name" value="PMI_typeI_hel"/>
</dbReference>
<dbReference type="InterPro" id="IPR014710">
    <property type="entry name" value="RmlC-like_jellyroll"/>
</dbReference>
<dbReference type="InterPro" id="IPR011051">
    <property type="entry name" value="RmlC_Cupin_sf"/>
</dbReference>
<dbReference type="NCBIfam" id="TIGR00218">
    <property type="entry name" value="manA"/>
    <property type="match status" value="1"/>
</dbReference>
<dbReference type="PANTHER" id="PTHR10309">
    <property type="entry name" value="MANNOSE-6-PHOSPHATE ISOMERASE"/>
    <property type="match status" value="1"/>
</dbReference>
<dbReference type="PANTHER" id="PTHR10309:SF9">
    <property type="entry name" value="MANNOSE-6-PHOSPHATE ISOMERASE 1"/>
    <property type="match status" value="1"/>
</dbReference>
<dbReference type="Pfam" id="PF20511">
    <property type="entry name" value="PMI_typeI_cat"/>
    <property type="match status" value="1"/>
</dbReference>
<dbReference type="Pfam" id="PF20512">
    <property type="entry name" value="PMI_typeI_hel"/>
    <property type="match status" value="1"/>
</dbReference>
<dbReference type="PIRSF" id="PIRSF001480">
    <property type="entry name" value="Mannose-6-phosphate_isomerase"/>
    <property type="match status" value="1"/>
</dbReference>
<dbReference type="PRINTS" id="PR00714">
    <property type="entry name" value="MAN6PISMRASE"/>
</dbReference>
<dbReference type="SUPFAM" id="SSF51182">
    <property type="entry name" value="RmlC-like cupins"/>
    <property type="match status" value="1"/>
</dbReference>
<dbReference type="PROSITE" id="PS00965">
    <property type="entry name" value="PMI_I_1"/>
    <property type="match status" value="1"/>
</dbReference>
<proteinExistence type="evidence at protein level"/>
<keyword id="KW-0007">Acetylation</keyword>
<keyword id="KW-0413">Isomerase</keyword>
<keyword id="KW-0479">Metal-binding</keyword>
<keyword id="KW-1185">Reference proteome</keyword>
<keyword id="KW-0862">Zinc</keyword>
<organism>
    <name type="scientific">Arabidopsis thaliana</name>
    <name type="common">Mouse-ear cress</name>
    <dbReference type="NCBI Taxonomy" id="3702"/>
    <lineage>
        <taxon>Eukaryota</taxon>
        <taxon>Viridiplantae</taxon>
        <taxon>Streptophyta</taxon>
        <taxon>Embryophyta</taxon>
        <taxon>Tracheophyta</taxon>
        <taxon>Spermatophyta</taxon>
        <taxon>Magnoliopsida</taxon>
        <taxon>eudicotyledons</taxon>
        <taxon>Gunneridae</taxon>
        <taxon>Pentapetalae</taxon>
        <taxon>rosids</taxon>
        <taxon>malvids</taxon>
        <taxon>Brassicales</taxon>
        <taxon>Brassicaceae</taxon>
        <taxon>Camelineae</taxon>
        <taxon>Arabidopsis</taxon>
    </lineage>
</organism>
<gene>
    <name type="primary">PMI1</name>
    <name type="synonym">MEE31</name>
    <name type="ordered locus">At3g02570</name>
    <name type="ORF">F16B3.20</name>
</gene>
<sequence>MEIATVVKANGGCEADRRRLRRLRCSVKDYDWGKIGSDSLVYRVYAANSDYEIDPTRPYAELWMGTHESGPSYLEDADGSNGVTLRSWITENPKSLGNRVLEKWGCDLPFLFKVLSVARPLSIQAHPDKKLAKKMHKAHPNLYKDDNHKPEMALAYTQFEALCGFIPLQELKSVIRAIPEIEELVGSEEANQVFCITEHDEEKVKSVVRTIFTLLMSADADTTKKIVSKLKRRLHMESQERQLTDKERLVLKLEKQYPNDIGVISAFFFNYVKLNPGEALYLGANEPHAYLFGECLEVMATSDNVVRAGLTSKPLDIQTLCSMLSYKLGYPEILKGTRIRPYITRYLPPFEEFEVDLCDLPSGASTVFPSVPGPSLLLVLQGEGRMSTEASADGISMGDVLFVPADTEIHLRSSSDLKLYRAGINSRFLFPL</sequence>
<evidence type="ECO:0000250" key="1"/>
<evidence type="ECO:0000269" key="2">
    <source>
    </source>
</evidence>
<evidence type="ECO:0000269" key="3">
    <source>
    </source>
</evidence>
<evidence type="ECO:0000305" key="4"/>
<evidence type="ECO:0007744" key="5">
    <source>
    </source>
</evidence>
<comment type="function">
    <text evidence="2 3">Phosphomannose isomerase involved in the synthesis of the GDP-mannose and dolichol-phosphate-mannose required for a number of critical mannosyl transfer reactions. Involved in the ascorbic acid (AsA) biosynthesis. Required during the endosperm development.</text>
</comment>
<comment type="catalytic activity">
    <reaction evidence="3">
        <text>D-mannose 6-phosphate = D-fructose 6-phosphate</text>
        <dbReference type="Rhea" id="RHEA:12356"/>
        <dbReference type="ChEBI" id="CHEBI:58735"/>
        <dbReference type="ChEBI" id="CHEBI:61527"/>
        <dbReference type="EC" id="5.3.1.8"/>
    </reaction>
</comment>
<comment type="cofactor">
    <cofactor evidence="1">
        <name>Zn(2+)</name>
        <dbReference type="ChEBI" id="CHEBI:29105"/>
    </cofactor>
    <text evidence="1">Binds 1 zinc ion per subunit.</text>
</comment>
<comment type="activity regulation">
    <text evidence="3">Inhibited by EDTA, Zn(2+), Cd(2+), Co(2+), p-chloromercuribenzoate and L-ascorbic acid (AsA).</text>
</comment>
<comment type="biophysicochemical properties">
    <kinetics>
        <KM evidence="3">41.3 uM for mannose-6-phosphate</KM>
        <Vmax evidence="3">1.89 umol/min/mg enzyme with mannose-6-phosphate as substrate</Vmax>
    </kinetics>
    <phDependence>
        <text evidence="3">Optimum pH is 7.5.</text>
    </phDependence>
    <temperatureDependence>
        <text evidence="3">Optimum temperature is 52 degrees Celsius.</text>
    </temperatureDependence>
</comment>
<comment type="pathway">
    <text>Nucleotide-sugar biosynthesis; GDP-alpha-D-mannose biosynthesis; alpha-D-mannose 1-phosphate from D-fructose 6-phosphate: step 1/2.</text>
</comment>
<comment type="tissue specificity">
    <text evidence="3">Constitutively expressed in both vegetative and reproductive organs under normal growth conditions (at protein level).</text>
</comment>
<comment type="induction">
    <text evidence="3">By light (at the protein level). Down-regulated by dark (at the protein level). Down-regulated by DCMU, an exogenous photosynthesis inhibitor.</text>
</comment>
<comment type="disruption phenotype">
    <text evidence="2">Endosperm development arrested.</text>
</comment>
<comment type="similarity">
    <text evidence="4">Belongs to the mannose-6-phosphate isomerase type 1 family.</text>
</comment>
<name>MPI1_ARATH</name>
<reference key="1">
    <citation type="journal article" date="2000" name="Nature">
        <title>Sequence and analysis of chromosome 3 of the plant Arabidopsis thaliana.</title>
        <authorList>
            <person name="Salanoubat M."/>
            <person name="Lemcke K."/>
            <person name="Rieger M."/>
            <person name="Ansorge W."/>
            <person name="Unseld M."/>
            <person name="Fartmann B."/>
            <person name="Valle G."/>
            <person name="Bloecker H."/>
            <person name="Perez-Alonso M."/>
            <person name="Obermaier B."/>
            <person name="Delseny M."/>
            <person name="Boutry M."/>
            <person name="Grivell L.A."/>
            <person name="Mache R."/>
            <person name="Puigdomenech P."/>
            <person name="De Simone V."/>
            <person name="Choisne N."/>
            <person name="Artiguenave F."/>
            <person name="Robert C."/>
            <person name="Brottier P."/>
            <person name="Wincker P."/>
            <person name="Cattolico L."/>
            <person name="Weissenbach J."/>
            <person name="Saurin W."/>
            <person name="Quetier F."/>
            <person name="Schaefer M."/>
            <person name="Mueller-Auer S."/>
            <person name="Gabel C."/>
            <person name="Fuchs M."/>
            <person name="Benes V."/>
            <person name="Wurmbach E."/>
            <person name="Drzonek H."/>
            <person name="Erfle H."/>
            <person name="Jordan N."/>
            <person name="Bangert S."/>
            <person name="Wiedelmann R."/>
            <person name="Kranz H."/>
            <person name="Voss H."/>
            <person name="Holland R."/>
            <person name="Brandt P."/>
            <person name="Nyakatura G."/>
            <person name="Vezzi A."/>
            <person name="D'Angelo M."/>
            <person name="Pallavicini A."/>
            <person name="Toppo S."/>
            <person name="Simionati B."/>
            <person name="Conrad A."/>
            <person name="Hornischer K."/>
            <person name="Kauer G."/>
            <person name="Loehnert T.-H."/>
            <person name="Nordsiek G."/>
            <person name="Reichelt J."/>
            <person name="Scharfe M."/>
            <person name="Schoen O."/>
            <person name="Bargues M."/>
            <person name="Terol J."/>
            <person name="Climent J."/>
            <person name="Navarro P."/>
            <person name="Collado C."/>
            <person name="Perez-Perez A."/>
            <person name="Ottenwaelder B."/>
            <person name="Duchemin D."/>
            <person name="Cooke R."/>
            <person name="Laudie M."/>
            <person name="Berger-Llauro C."/>
            <person name="Purnelle B."/>
            <person name="Masuy D."/>
            <person name="de Haan M."/>
            <person name="Maarse A.C."/>
            <person name="Alcaraz J.-P."/>
            <person name="Cottet A."/>
            <person name="Casacuberta E."/>
            <person name="Monfort A."/>
            <person name="Argiriou A."/>
            <person name="Flores M."/>
            <person name="Liguori R."/>
            <person name="Vitale D."/>
            <person name="Mannhaupt G."/>
            <person name="Haase D."/>
            <person name="Schoof H."/>
            <person name="Rudd S."/>
            <person name="Zaccaria P."/>
            <person name="Mewes H.-W."/>
            <person name="Mayer K.F.X."/>
            <person name="Kaul S."/>
            <person name="Town C.D."/>
            <person name="Koo H.L."/>
            <person name="Tallon L.J."/>
            <person name="Jenkins J."/>
            <person name="Rooney T."/>
            <person name="Rizzo M."/>
            <person name="Walts A."/>
            <person name="Utterback T."/>
            <person name="Fujii C.Y."/>
            <person name="Shea T.P."/>
            <person name="Creasy T.H."/>
            <person name="Haas B."/>
            <person name="Maiti R."/>
            <person name="Wu D."/>
            <person name="Peterson J."/>
            <person name="Van Aken S."/>
            <person name="Pai G."/>
            <person name="Militscher J."/>
            <person name="Sellers P."/>
            <person name="Gill J.E."/>
            <person name="Feldblyum T.V."/>
            <person name="Preuss D."/>
            <person name="Lin X."/>
            <person name="Nierman W.C."/>
            <person name="Salzberg S.L."/>
            <person name="White O."/>
            <person name="Venter J.C."/>
            <person name="Fraser C.M."/>
            <person name="Kaneko T."/>
            <person name="Nakamura Y."/>
            <person name="Sato S."/>
            <person name="Kato T."/>
            <person name="Asamizu E."/>
            <person name="Sasamoto S."/>
            <person name="Kimura T."/>
            <person name="Idesawa K."/>
            <person name="Kawashima K."/>
            <person name="Kishida Y."/>
            <person name="Kiyokawa C."/>
            <person name="Kohara M."/>
            <person name="Matsumoto M."/>
            <person name="Matsuno A."/>
            <person name="Muraki A."/>
            <person name="Nakayama S."/>
            <person name="Nakazaki N."/>
            <person name="Shinpo S."/>
            <person name="Takeuchi C."/>
            <person name="Wada T."/>
            <person name="Watanabe A."/>
            <person name="Yamada M."/>
            <person name="Yasuda M."/>
            <person name="Tabata S."/>
        </authorList>
    </citation>
    <scope>NUCLEOTIDE SEQUENCE [LARGE SCALE GENOMIC DNA]</scope>
    <source>
        <strain>cv. Columbia</strain>
    </source>
</reference>
<reference key="2">
    <citation type="journal article" date="2017" name="Plant J.">
        <title>Araport11: a complete reannotation of the Arabidopsis thaliana reference genome.</title>
        <authorList>
            <person name="Cheng C.Y."/>
            <person name="Krishnakumar V."/>
            <person name="Chan A.P."/>
            <person name="Thibaud-Nissen F."/>
            <person name="Schobel S."/>
            <person name="Town C.D."/>
        </authorList>
    </citation>
    <scope>GENOME REANNOTATION</scope>
    <source>
        <strain>cv. Columbia</strain>
    </source>
</reference>
<reference key="3">
    <citation type="journal article" date="2003" name="Science">
        <title>Empirical analysis of transcriptional activity in the Arabidopsis genome.</title>
        <authorList>
            <person name="Yamada K."/>
            <person name="Lim J."/>
            <person name="Dale J.M."/>
            <person name="Chen H."/>
            <person name="Shinn P."/>
            <person name="Palm C.J."/>
            <person name="Southwick A.M."/>
            <person name="Wu H.C."/>
            <person name="Kim C.J."/>
            <person name="Nguyen M."/>
            <person name="Pham P.K."/>
            <person name="Cheuk R.F."/>
            <person name="Karlin-Newmann G."/>
            <person name="Liu S.X."/>
            <person name="Lam B."/>
            <person name="Sakano H."/>
            <person name="Wu T."/>
            <person name="Yu G."/>
            <person name="Miranda M."/>
            <person name="Quach H.L."/>
            <person name="Tripp M."/>
            <person name="Chang C.H."/>
            <person name="Lee J.M."/>
            <person name="Toriumi M.J."/>
            <person name="Chan M.M."/>
            <person name="Tang C.C."/>
            <person name="Onodera C.S."/>
            <person name="Deng J.M."/>
            <person name="Akiyama K."/>
            <person name="Ansari Y."/>
            <person name="Arakawa T."/>
            <person name="Banh J."/>
            <person name="Banno F."/>
            <person name="Bowser L."/>
            <person name="Brooks S.Y."/>
            <person name="Carninci P."/>
            <person name="Chao Q."/>
            <person name="Choy N."/>
            <person name="Enju A."/>
            <person name="Goldsmith A.D."/>
            <person name="Gurjal M."/>
            <person name="Hansen N.F."/>
            <person name="Hayashizaki Y."/>
            <person name="Johnson-Hopson C."/>
            <person name="Hsuan V.W."/>
            <person name="Iida K."/>
            <person name="Karnes M."/>
            <person name="Khan S."/>
            <person name="Koesema E."/>
            <person name="Ishida J."/>
            <person name="Jiang P.X."/>
            <person name="Jones T."/>
            <person name="Kawai J."/>
            <person name="Kamiya A."/>
            <person name="Meyers C."/>
            <person name="Nakajima M."/>
            <person name="Narusaka M."/>
            <person name="Seki M."/>
            <person name="Sakurai T."/>
            <person name="Satou M."/>
            <person name="Tamse R."/>
            <person name="Vaysberg M."/>
            <person name="Wallender E.K."/>
            <person name="Wong C."/>
            <person name="Yamamura Y."/>
            <person name="Yuan S."/>
            <person name="Shinozaki K."/>
            <person name="Davis R.W."/>
            <person name="Theologis A."/>
            <person name="Ecker J.R."/>
        </authorList>
    </citation>
    <scope>NUCLEOTIDE SEQUENCE [LARGE SCALE MRNA]</scope>
    <source>
        <strain>cv. Columbia</strain>
    </source>
</reference>
<reference key="4">
    <citation type="journal article" date="2005" name="Development">
        <title>Genetic and molecular identification of genes required for female gametophyte development and function in Arabidopsis.</title>
        <authorList>
            <person name="Pagnussat G.C."/>
            <person name="Yu H.-J."/>
            <person name="Ngo Q.A."/>
            <person name="Rajani S."/>
            <person name="Mayalagu S."/>
            <person name="Johnson C.S."/>
            <person name="Capron A."/>
            <person name="Xie L.-F."/>
            <person name="Ye D."/>
            <person name="Sundaresan V."/>
        </authorList>
    </citation>
    <scope>FUNCTION</scope>
    <scope>DISRUPTION PHENOTYPE</scope>
</reference>
<reference key="5">
    <citation type="journal article" date="2008" name="J. Biol. Chem.">
        <title>Arabidopsis phosphomannose isomerase 1, but not phosphomannose isomerase 2, is essential for ascorbic acid biosynthesis.</title>
        <authorList>
            <person name="Maruta T."/>
            <person name="Yonemitsu M."/>
            <person name="Yabuta Y."/>
            <person name="Tamoi M."/>
            <person name="Ishikawa T."/>
            <person name="Shigeoka S."/>
        </authorList>
    </citation>
    <scope>FUNCTION</scope>
    <scope>CATALYTIC ACTIVITY</scope>
    <scope>BIOPHYSICOCHEMICAL PROPERTIES</scope>
    <scope>ACTIVITY REGULATION</scope>
    <scope>TISSUE SPECIFICITY</scope>
    <scope>INDUCTION</scope>
</reference>
<reference key="6">
    <citation type="journal article" date="2012" name="Mol. Cell. Proteomics">
        <title>Comparative large-scale characterisation of plant vs. mammal proteins reveals similar and idiosyncratic N-alpha acetylation features.</title>
        <authorList>
            <person name="Bienvenut W.V."/>
            <person name="Sumpton D."/>
            <person name="Martinez A."/>
            <person name="Lilla S."/>
            <person name="Espagne C."/>
            <person name="Meinnel T."/>
            <person name="Giglione C."/>
        </authorList>
    </citation>
    <scope>ACETYLATION [LARGE SCALE ANALYSIS] AT MET-1</scope>
    <scope>IDENTIFICATION BY MASS SPECTROMETRY [LARGE SCALE ANALYSIS]</scope>
</reference>
<accession>Q9M884</accession>
<protein>
    <recommendedName>
        <fullName>Mannose-6-phosphate isomerase 1</fullName>
        <ecNumber evidence="3">5.3.1.8</ecNumber>
    </recommendedName>
    <alternativeName>
        <fullName>Phosphohexomutase 1</fullName>
    </alternativeName>
    <alternativeName>
        <fullName>Phosphomannose isomerase 1</fullName>
        <shortName>PMI1</shortName>
    </alternativeName>
    <alternativeName>
        <fullName>Protein MATERNAL EFFECT EMBRYO ARREST 31</fullName>
    </alternativeName>
</protein>
<feature type="chain" id="PRO_0000420339" description="Mannose-6-phosphate isomerase 1">
    <location>
        <begin position="1"/>
        <end position="432"/>
    </location>
</feature>
<feature type="active site" evidence="1">
    <location>
        <position position="307"/>
    </location>
</feature>
<feature type="binding site" evidence="1">
    <location>
        <position position="124"/>
    </location>
    <ligand>
        <name>Zn(2+)</name>
        <dbReference type="ChEBI" id="CHEBI:29105"/>
    </ligand>
</feature>
<feature type="binding site" evidence="1">
    <location>
        <position position="126"/>
    </location>
    <ligand>
        <name>Zn(2+)</name>
        <dbReference type="ChEBI" id="CHEBI:29105"/>
    </ligand>
</feature>
<feature type="binding site" evidence="1">
    <location>
        <position position="151"/>
    </location>
    <ligand>
        <name>Zn(2+)</name>
        <dbReference type="ChEBI" id="CHEBI:29105"/>
    </ligand>
</feature>
<feature type="binding site" evidence="1">
    <location>
        <position position="288"/>
    </location>
    <ligand>
        <name>Zn(2+)</name>
        <dbReference type="ChEBI" id="CHEBI:29105"/>
    </ligand>
</feature>
<feature type="modified residue" description="N-acetylmethionine" evidence="5">
    <location>
        <position position="1"/>
    </location>
</feature>